<gene>
    <name evidence="2" type="primary">SLC35A4</name>
</gene>
<comment type="function">
    <text evidence="2">Mediates the transport of CDP-ribitol (By similarity). Does not exhibit CMP-sialic acid, UDP-galactose and UDP-N-acetylglucosamine transport activity (By similarity).</text>
</comment>
<comment type="catalytic activity">
    <reaction evidence="2">
        <text>CDP-L-ribitol(in) + CDP(out) = CDP-L-ribitol(out) + CDP(in)</text>
        <dbReference type="Rhea" id="RHEA:71579"/>
        <dbReference type="ChEBI" id="CHEBI:57608"/>
        <dbReference type="ChEBI" id="CHEBI:58069"/>
    </reaction>
</comment>
<comment type="subunit">
    <text evidence="2">Found in a complex with SLC35A2 and SLC35A3.</text>
</comment>
<comment type="subcellular location">
    <subcellularLocation>
        <location evidence="1">Golgi apparatus membrane</location>
        <topology evidence="3">Multi-pass membrane protein</topology>
    </subcellularLocation>
</comment>
<comment type="similarity">
    <text evidence="4">Belongs to the nucleotide-sugar transporter family. SLC35A subfamily.</text>
</comment>
<feature type="chain" id="PRO_0000337747" description="Probable UDP-sugar transporter protein SLC35A4">
    <location>
        <begin position="1"/>
        <end position="324"/>
    </location>
</feature>
<feature type="topological domain" description="Cytoplasmic" evidence="2">
    <location>
        <begin position="1"/>
        <end position="18"/>
    </location>
</feature>
<feature type="transmembrane region" description="Helical" evidence="3">
    <location>
        <begin position="19"/>
        <end position="39"/>
    </location>
</feature>
<feature type="topological domain" description="Lumenal" evidence="2">
    <location>
        <begin position="40"/>
        <end position="52"/>
    </location>
</feature>
<feature type="transmembrane region" description="Helical" evidence="3">
    <location>
        <begin position="53"/>
        <end position="73"/>
    </location>
</feature>
<feature type="topological domain" description="Cytoplasmic" evidence="2">
    <location>
        <begin position="74"/>
        <end position="85"/>
    </location>
</feature>
<feature type="transmembrane region" description="Helical" evidence="3">
    <location>
        <begin position="86"/>
        <end position="106"/>
    </location>
</feature>
<feature type="topological domain" description="Lumenal" evidence="2">
    <location>
        <begin position="107"/>
        <end position="141"/>
    </location>
</feature>
<feature type="transmembrane region" description="Helical" evidence="3">
    <location>
        <begin position="142"/>
        <end position="162"/>
    </location>
</feature>
<feature type="topological domain" description="Cytoplasmic" evidence="2">
    <location>
        <begin position="163"/>
        <end position="180"/>
    </location>
</feature>
<feature type="transmembrane region" description="Helical" evidence="3">
    <location>
        <begin position="181"/>
        <end position="201"/>
    </location>
</feature>
<feature type="topological domain" description="Lumenal" evidence="2">
    <location>
        <begin position="202"/>
        <end position="214"/>
    </location>
</feature>
<feature type="transmembrane region" description="Helical" evidence="3">
    <location>
        <begin position="215"/>
        <end position="235"/>
    </location>
</feature>
<feature type="topological domain" description="Cytoplasmic" evidence="2">
    <location>
        <begin position="236"/>
        <end position="248"/>
    </location>
</feature>
<feature type="transmembrane region" description="Helical" evidence="3">
    <location>
        <begin position="249"/>
        <end position="271"/>
    </location>
</feature>
<feature type="topological domain" description="Lumenal" evidence="2">
    <location>
        <begin position="272"/>
        <end position="275"/>
    </location>
</feature>
<feature type="transmembrane region" description="Helical" evidence="3">
    <location>
        <begin position="276"/>
        <end position="298"/>
    </location>
</feature>
<feature type="topological domain" description="Cytoplasmic" evidence="2">
    <location>
        <begin position="299"/>
        <end position="324"/>
    </location>
</feature>
<sequence length="324" mass="34540">MSVEDGGVPGLGRPRKARWTLMLLLSTAMYGAHAPLLALCHVDGRVPFRPSSAVLLTELTKLLLCALSLLVGWQAWPQGTPPWRQAAPFALSALLYGANNNLVIYLQRYMDPSTYQVLSNLKIGSTALFYCLCLRHRLSARQGLALLLLMAAGACYAAGGLQDPGTTLPGPPSAAATSPMPLHITPLGLLLLILYCLISGLSSVYTELLMKRQRLPLALQNLFLYSFGVLLNLGLHAGGGPGPGLLEGFSGWMALVVLSQALNGLLMSAVMKHGSSITRLFVVSCSLVVNAVLSAALLRLQLTAAFFLATLLIGLAVRLYYGSR</sequence>
<accession>Q05B73</accession>
<dbReference type="EMBL" id="BC122672">
    <property type="protein sequence ID" value="AAI22673.1"/>
    <property type="molecule type" value="mRNA"/>
</dbReference>
<dbReference type="EMBL" id="BC150113">
    <property type="protein sequence ID" value="AAI50114.1"/>
    <property type="molecule type" value="mRNA"/>
</dbReference>
<dbReference type="EMBL" id="BC151579">
    <property type="protein sequence ID" value="AAI51580.1"/>
    <property type="molecule type" value="mRNA"/>
</dbReference>
<dbReference type="RefSeq" id="NP_001073080.1">
    <property type="nucleotide sequence ID" value="NM_001079612.1"/>
</dbReference>
<dbReference type="RefSeq" id="XP_005209526.1">
    <property type="nucleotide sequence ID" value="XM_005209469.2"/>
</dbReference>
<dbReference type="SMR" id="Q05B73"/>
<dbReference type="FunCoup" id="Q05B73">
    <property type="interactions" value="1101"/>
</dbReference>
<dbReference type="PaxDb" id="9913-ENSBTAP00000040788"/>
<dbReference type="Ensembl" id="ENSBTAT00000043199.5">
    <property type="protein sequence ID" value="ENSBTAP00000040788.5"/>
    <property type="gene ID" value="ENSBTAG00000030584.5"/>
</dbReference>
<dbReference type="Ensembl" id="ENSBTAT00000088076.1">
    <property type="protein sequence ID" value="ENSBTAP00000094111.1"/>
    <property type="gene ID" value="ENSBTAG00000030584.5"/>
</dbReference>
<dbReference type="Ensembl" id="ENSBTAT00000098840.1">
    <property type="protein sequence ID" value="ENSBTAP00000097942.1"/>
    <property type="gene ID" value="ENSBTAG00000030584.5"/>
</dbReference>
<dbReference type="Ensembl" id="ENSBTAT00000104330.1">
    <property type="protein sequence ID" value="ENSBTAP00000096911.1"/>
    <property type="gene ID" value="ENSBTAG00000030584.5"/>
</dbReference>
<dbReference type="Ensembl" id="ENSBTAT00000105520.1">
    <property type="protein sequence ID" value="ENSBTAP00000082431.1"/>
    <property type="gene ID" value="ENSBTAG00000030584.5"/>
</dbReference>
<dbReference type="Ensembl" id="ENSBTAT00000106849.1">
    <property type="protein sequence ID" value="ENSBTAP00000101345.1"/>
    <property type="gene ID" value="ENSBTAG00000030584.5"/>
</dbReference>
<dbReference type="Ensembl" id="ENSBTAT00000118055.1">
    <property type="protein sequence ID" value="ENSBTAP00000078914.1"/>
    <property type="gene ID" value="ENSBTAG00000030584.5"/>
</dbReference>
<dbReference type="GeneID" id="539354"/>
<dbReference type="KEGG" id="bta:539354"/>
<dbReference type="CTD" id="113829"/>
<dbReference type="VGNC" id="VGNC:34821">
    <property type="gene designation" value="SLC35A4"/>
</dbReference>
<dbReference type="eggNOG" id="KOG2234">
    <property type="taxonomic scope" value="Eukaryota"/>
</dbReference>
<dbReference type="GeneTree" id="ENSGT00950000182827"/>
<dbReference type="HOGENOM" id="CLU_024645_5_1_1"/>
<dbReference type="InParanoid" id="Q05B73"/>
<dbReference type="OrthoDB" id="419167at2759"/>
<dbReference type="TreeFam" id="TF315345"/>
<dbReference type="Proteomes" id="UP000009136">
    <property type="component" value="Chromosome 7"/>
</dbReference>
<dbReference type="GO" id="GO:0005794">
    <property type="term" value="C:Golgi apparatus"/>
    <property type="evidence" value="ECO:0000250"/>
    <property type="project" value="UniProtKB"/>
</dbReference>
<dbReference type="GO" id="GO:0000139">
    <property type="term" value="C:Golgi membrane"/>
    <property type="evidence" value="ECO:0000250"/>
    <property type="project" value="UniProtKB"/>
</dbReference>
<dbReference type="GO" id="GO:0015165">
    <property type="term" value="F:pyrimidine nucleotide-sugar transmembrane transporter activity"/>
    <property type="evidence" value="ECO:0007669"/>
    <property type="project" value="InterPro"/>
</dbReference>
<dbReference type="GO" id="GO:0022857">
    <property type="term" value="F:transmembrane transporter activity"/>
    <property type="evidence" value="ECO:0000318"/>
    <property type="project" value="GO_Central"/>
</dbReference>
<dbReference type="GO" id="GO:0055085">
    <property type="term" value="P:transmembrane transport"/>
    <property type="evidence" value="ECO:0000318"/>
    <property type="project" value="GO_Central"/>
</dbReference>
<dbReference type="InterPro" id="IPR007271">
    <property type="entry name" value="Nuc_sug_transpt"/>
</dbReference>
<dbReference type="PANTHER" id="PTHR10231">
    <property type="entry name" value="NUCLEOTIDE-SUGAR TRANSMEMBRANE TRANSPORTER"/>
    <property type="match status" value="1"/>
</dbReference>
<dbReference type="Pfam" id="PF04142">
    <property type="entry name" value="Nuc_sug_transp"/>
    <property type="match status" value="1"/>
</dbReference>
<dbReference type="PIRSF" id="PIRSF005799">
    <property type="entry name" value="UDP-gal_transpt"/>
    <property type="match status" value="1"/>
</dbReference>
<dbReference type="SUPFAM" id="SSF103481">
    <property type="entry name" value="Multidrug resistance efflux transporter EmrE"/>
    <property type="match status" value="1"/>
</dbReference>
<keyword id="KW-0333">Golgi apparatus</keyword>
<keyword id="KW-0472">Membrane</keyword>
<keyword id="KW-1185">Reference proteome</keyword>
<keyword id="KW-0762">Sugar transport</keyword>
<keyword id="KW-0812">Transmembrane</keyword>
<keyword id="KW-1133">Transmembrane helix</keyword>
<keyword id="KW-0813">Transport</keyword>
<name>S35A4_BOVIN</name>
<protein>
    <recommendedName>
        <fullName evidence="4">Probable UDP-sugar transporter protein SLC35A4</fullName>
    </recommendedName>
    <alternativeName>
        <fullName evidence="2">Solute carrier family 35 member A4</fullName>
    </alternativeName>
</protein>
<reference key="1">
    <citation type="submission" date="2006-08" db="EMBL/GenBank/DDBJ databases">
        <authorList>
            <consortium name="NIH - Mammalian Gene Collection (MGC) project"/>
        </authorList>
    </citation>
    <scope>NUCLEOTIDE SEQUENCE [LARGE SCALE MRNA]</scope>
    <source>
        <strain>Hereford</strain>
        <tissue>Ascending colon</tissue>
        <tissue>Fetal muscle</tissue>
        <tissue>Hippocampus</tissue>
    </source>
</reference>
<organism>
    <name type="scientific">Bos taurus</name>
    <name type="common">Bovine</name>
    <dbReference type="NCBI Taxonomy" id="9913"/>
    <lineage>
        <taxon>Eukaryota</taxon>
        <taxon>Metazoa</taxon>
        <taxon>Chordata</taxon>
        <taxon>Craniata</taxon>
        <taxon>Vertebrata</taxon>
        <taxon>Euteleostomi</taxon>
        <taxon>Mammalia</taxon>
        <taxon>Eutheria</taxon>
        <taxon>Laurasiatheria</taxon>
        <taxon>Artiodactyla</taxon>
        <taxon>Ruminantia</taxon>
        <taxon>Pecora</taxon>
        <taxon>Bovidae</taxon>
        <taxon>Bovinae</taxon>
        <taxon>Bos</taxon>
    </lineage>
</organism>
<proteinExistence type="evidence at transcript level"/>
<evidence type="ECO:0000250" key="1">
    <source>
        <dbReference type="UniProtKB" id="Q91ZR7"/>
    </source>
</evidence>
<evidence type="ECO:0000250" key="2">
    <source>
        <dbReference type="UniProtKB" id="Q96G79"/>
    </source>
</evidence>
<evidence type="ECO:0000255" key="3"/>
<evidence type="ECO:0000305" key="4"/>